<name>KAD_AERS4</name>
<organism>
    <name type="scientific">Aeromonas salmonicida (strain A449)</name>
    <dbReference type="NCBI Taxonomy" id="382245"/>
    <lineage>
        <taxon>Bacteria</taxon>
        <taxon>Pseudomonadati</taxon>
        <taxon>Pseudomonadota</taxon>
        <taxon>Gammaproteobacteria</taxon>
        <taxon>Aeromonadales</taxon>
        <taxon>Aeromonadaceae</taxon>
        <taxon>Aeromonas</taxon>
    </lineage>
</organism>
<keyword id="KW-0067">ATP-binding</keyword>
<keyword id="KW-0963">Cytoplasm</keyword>
<keyword id="KW-0418">Kinase</keyword>
<keyword id="KW-0545">Nucleotide biosynthesis</keyword>
<keyword id="KW-0547">Nucleotide-binding</keyword>
<keyword id="KW-0808">Transferase</keyword>
<sequence length="214" mass="23197">MRIVLLGAPGAGKGTQAQFIMEKHGIPQISTGDMLRAAIKAGTELGLNAKAVMDAGQLVSDDIIIGLVKERIAQPDCANGFLLDGFPRTIPQAQAMKDAGVVVDFVLEFDVPDEEIVKRMSGRRVHSGSGRTYHVVFNPPKVEGKDDVTGEDLVIRADDEETTVRKRLDVYHQQTAPLIGFYGKEAEAGNTRYVKIDGTQPVDQVSKQLARILG</sequence>
<dbReference type="EC" id="2.7.4.3" evidence="1"/>
<dbReference type="EMBL" id="CP000644">
    <property type="protein sequence ID" value="ABO89903.1"/>
    <property type="molecule type" value="Genomic_DNA"/>
</dbReference>
<dbReference type="RefSeq" id="WP_005315223.1">
    <property type="nucleotide sequence ID" value="NC_009348.1"/>
</dbReference>
<dbReference type="SMR" id="A4SLY1"/>
<dbReference type="STRING" id="29491.GCA_000820065_03091"/>
<dbReference type="KEGG" id="asa:ASA_1827"/>
<dbReference type="PATRIC" id="fig|382245.13.peg.1808"/>
<dbReference type="eggNOG" id="COG0563">
    <property type="taxonomic scope" value="Bacteria"/>
</dbReference>
<dbReference type="HOGENOM" id="CLU_032354_1_2_6"/>
<dbReference type="UniPathway" id="UPA00588">
    <property type="reaction ID" value="UER00649"/>
</dbReference>
<dbReference type="Proteomes" id="UP000000225">
    <property type="component" value="Chromosome"/>
</dbReference>
<dbReference type="GO" id="GO:0005737">
    <property type="term" value="C:cytoplasm"/>
    <property type="evidence" value="ECO:0007669"/>
    <property type="project" value="UniProtKB-SubCell"/>
</dbReference>
<dbReference type="GO" id="GO:0004017">
    <property type="term" value="F:adenylate kinase activity"/>
    <property type="evidence" value="ECO:0007669"/>
    <property type="project" value="UniProtKB-UniRule"/>
</dbReference>
<dbReference type="GO" id="GO:0005524">
    <property type="term" value="F:ATP binding"/>
    <property type="evidence" value="ECO:0007669"/>
    <property type="project" value="UniProtKB-UniRule"/>
</dbReference>
<dbReference type="GO" id="GO:0044209">
    <property type="term" value="P:AMP salvage"/>
    <property type="evidence" value="ECO:0007669"/>
    <property type="project" value="UniProtKB-UniRule"/>
</dbReference>
<dbReference type="CDD" id="cd01428">
    <property type="entry name" value="ADK"/>
    <property type="match status" value="1"/>
</dbReference>
<dbReference type="FunFam" id="3.40.50.300:FF:000106">
    <property type="entry name" value="Adenylate kinase mitochondrial"/>
    <property type="match status" value="1"/>
</dbReference>
<dbReference type="Gene3D" id="3.40.50.300">
    <property type="entry name" value="P-loop containing nucleotide triphosphate hydrolases"/>
    <property type="match status" value="1"/>
</dbReference>
<dbReference type="HAMAP" id="MF_00235">
    <property type="entry name" value="Adenylate_kinase_Adk"/>
    <property type="match status" value="1"/>
</dbReference>
<dbReference type="InterPro" id="IPR006259">
    <property type="entry name" value="Adenyl_kin_sub"/>
</dbReference>
<dbReference type="InterPro" id="IPR000850">
    <property type="entry name" value="Adenylat/UMP-CMP_kin"/>
</dbReference>
<dbReference type="InterPro" id="IPR033690">
    <property type="entry name" value="Adenylat_kinase_CS"/>
</dbReference>
<dbReference type="InterPro" id="IPR007862">
    <property type="entry name" value="Adenylate_kinase_lid-dom"/>
</dbReference>
<dbReference type="InterPro" id="IPR027417">
    <property type="entry name" value="P-loop_NTPase"/>
</dbReference>
<dbReference type="NCBIfam" id="TIGR01351">
    <property type="entry name" value="adk"/>
    <property type="match status" value="1"/>
</dbReference>
<dbReference type="NCBIfam" id="NF001379">
    <property type="entry name" value="PRK00279.1-1"/>
    <property type="match status" value="1"/>
</dbReference>
<dbReference type="NCBIfam" id="NF001380">
    <property type="entry name" value="PRK00279.1-2"/>
    <property type="match status" value="1"/>
</dbReference>
<dbReference type="NCBIfam" id="NF001381">
    <property type="entry name" value="PRK00279.1-3"/>
    <property type="match status" value="1"/>
</dbReference>
<dbReference type="NCBIfam" id="NF011100">
    <property type="entry name" value="PRK14527.1"/>
    <property type="match status" value="1"/>
</dbReference>
<dbReference type="PANTHER" id="PTHR23359">
    <property type="entry name" value="NUCLEOTIDE KINASE"/>
    <property type="match status" value="1"/>
</dbReference>
<dbReference type="Pfam" id="PF00406">
    <property type="entry name" value="ADK"/>
    <property type="match status" value="1"/>
</dbReference>
<dbReference type="Pfam" id="PF05191">
    <property type="entry name" value="ADK_lid"/>
    <property type="match status" value="1"/>
</dbReference>
<dbReference type="PRINTS" id="PR00094">
    <property type="entry name" value="ADENYLTKNASE"/>
</dbReference>
<dbReference type="SUPFAM" id="SSF52540">
    <property type="entry name" value="P-loop containing nucleoside triphosphate hydrolases"/>
    <property type="match status" value="1"/>
</dbReference>
<dbReference type="PROSITE" id="PS00113">
    <property type="entry name" value="ADENYLATE_KINASE"/>
    <property type="match status" value="1"/>
</dbReference>
<accession>A4SLY1</accession>
<evidence type="ECO:0000255" key="1">
    <source>
        <dbReference type="HAMAP-Rule" id="MF_00235"/>
    </source>
</evidence>
<gene>
    <name evidence="1" type="primary">adk</name>
    <name type="ordered locus">ASA_1827</name>
</gene>
<proteinExistence type="inferred from homology"/>
<feature type="chain" id="PRO_1000058779" description="Adenylate kinase">
    <location>
        <begin position="1"/>
        <end position="214"/>
    </location>
</feature>
<feature type="region of interest" description="NMP" evidence="1">
    <location>
        <begin position="30"/>
        <end position="59"/>
    </location>
</feature>
<feature type="region of interest" description="LID" evidence="1">
    <location>
        <begin position="122"/>
        <end position="159"/>
    </location>
</feature>
<feature type="binding site" evidence="1">
    <location>
        <begin position="10"/>
        <end position="15"/>
    </location>
    <ligand>
        <name>ATP</name>
        <dbReference type="ChEBI" id="CHEBI:30616"/>
    </ligand>
</feature>
<feature type="binding site" evidence="1">
    <location>
        <position position="31"/>
    </location>
    <ligand>
        <name>AMP</name>
        <dbReference type="ChEBI" id="CHEBI:456215"/>
    </ligand>
</feature>
<feature type="binding site" evidence="1">
    <location>
        <position position="36"/>
    </location>
    <ligand>
        <name>AMP</name>
        <dbReference type="ChEBI" id="CHEBI:456215"/>
    </ligand>
</feature>
<feature type="binding site" evidence="1">
    <location>
        <begin position="57"/>
        <end position="59"/>
    </location>
    <ligand>
        <name>AMP</name>
        <dbReference type="ChEBI" id="CHEBI:456215"/>
    </ligand>
</feature>
<feature type="binding site" evidence="1">
    <location>
        <begin position="85"/>
        <end position="88"/>
    </location>
    <ligand>
        <name>AMP</name>
        <dbReference type="ChEBI" id="CHEBI:456215"/>
    </ligand>
</feature>
<feature type="binding site" evidence="1">
    <location>
        <position position="92"/>
    </location>
    <ligand>
        <name>AMP</name>
        <dbReference type="ChEBI" id="CHEBI:456215"/>
    </ligand>
</feature>
<feature type="binding site" evidence="1">
    <location>
        <position position="123"/>
    </location>
    <ligand>
        <name>ATP</name>
        <dbReference type="ChEBI" id="CHEBI:30616"/>
    </ligand>
</feature>
<feature type="binding site" evidence="1">
    <location>
        <begin position="132"/>
        <end position="133"/>
    </location>
    <ligand>
        <name>ATP</name>
        <dbReference type="ChEBI" id="CHEBI:30616"/>
    </ligand>
</feature>
<feature type="binding site" evidence="1">
    <location>
        <position position="156"/>
    </location>
    <ligand>
        <name>AMP</name>
        <dbReference type="ChEBI" id="CHEBI:456215"/>
    </ligand>
</feature>
<feature type="binding site" evidence="1">
    <location>
        <position position="167"/>
    </location>
    <ligand>
        <name>AMP</name>
        <dbReference type="ChEBI" id="CHEBI:456215"/>
    </ligand>
</feature>
<feature type="binding site" evidence="1">
    <location>
        <position position="200"/>
    </location>
    <ligand>
        <name>ATP</name>
        <dbReference type="ChEBI" id="CHEBI:30616"/>
    </ligand>
</feature>
<protein>
    <recommendedName>
        <fullName evidence="1">Adenylate kinase</fullName>
        <shortName evidence="1">AK</shortName>
        <ecNumber evidence="1">2.7.4.3</ecNumber>
    </recommendedName>
    <alternativeName>
        <fullName evidence="1">ATP-AMP transphosphorylase</fullName>
    </alternativeName>
    <alternativeName>
        <fullName evidence="1">ATP:AMP phosphotransferase</fullName>
    </alternativeName>
    <alternativeName>
        <fullName evidence="1">Adenylate monophosphate kinase</fullName>
    </alternativeName>
</protein>
<reference key="1">
    <citation type="journal article" date="2008" name="BMC Genomics">
        <title>The genome of Aeromonas salmonicida subsp. salmonicida A449: insights into the evolution of a fish pathogen.</title>
        <authorList>
            <person name="Reith M.E."/>
            <person name="Singh R.K."/>
            <person name="Curtis B."/>
            <person name="Boyd J.M."/>
            <person name="Bouevitch A."/>
            <person name="Kimball J."/>
            <person name="Munholland J."/>
            <person name="Murphy C."/>
            <person name="Sarty D."/>
            <person name="Williams J."/>
            <person name="Nash J.H."/>
            <person name="Johnson S.C."/>
            <person name="Brown L.L."/>
        </authorList>
    </citation>
    <scope>NUCLEOTIDE SEQUENCE [LARGE SCALE GENOMIC DNA]</scope>
    <source>
        <strain>A449</strain>
    </source>
</reference>
<comment type="function">
    <text evidence="1">Catalyzes the reversible transfer of the terminal phosphate group between ATP and AMP. Plays an important role in cellular energy homeostasis and in adenine nucleotide metabolism.</text>
</comment>
<comment type="catalytic activity">
    <reaction evidence="1">
        <text>AMP + ATP = 2 ADP</text>
        <dbReference type="Rhea" id="RHEA:12973"/>
        <dbReference type="ChEBI" id="CHEBI:30616"/>
        <dbReference type="ChEBI" id="CHEBI:456215"/>
        <dbReference type="ChEBI" id="CHEBI:456216"/>
        <dbReference type="EC" id="2.7.4.3"/>
    </reaction>
</comment>
<comment type="pathway">
    <text evidence="1">Purine metabolism; AMP biosynthesis via salvage pathway; AMP from ADP: step 1/1.</text>
</comment>
<comment type="subunit">
    <text evidence="1">Monomer.</text>
</comment>
<comment type="subcellular location">
    <subcellularLocation>
        <location evidence="1">Cytoplasm</location>
    </subcellularLocation>
</comment>
<comment type="domain">
    <text evidence="1">Consists of three domains, a large central CORE domain and two small peripheral domains, NMPbind and LID, which undergo movements during catalysis. The LID domain closes over the site of phosphoryl transfer upon ATP binding. Assembling and dissambling the active center during each catalytic cycle provides an effective means to prevent ATP hydrolysis.</text>
</comment>
<comment type="similarity">
    <text evidence="1">Belongs to the adenylate kinase family.</text>
</comment>